<sequence>MSDISKASLPKAIFLMGPTASGKTALAIELRKILPVELISVDSALIYKGMDIGTAKPNAEELLAAPHRLLDIRDPSQAYSAADFRRDALAEMADITAAGRIPLLVGGTMLYFKALLEGLSPLPSADPEVRARIEQQAAEQGWESLHRQLQEVDPVAAARIHPNDPQRLSRALEVFFISGKTLTELTQTSGDALPYQVHQFAIAPASRELLHQRIEQRFHQMLASGFEAEVRALFARGDLHTDLPSIRCVGYRQMWSYLEGEISYDEMVYRGVCATRQLAKRQITWLRGWEGVHWLDSEKPEQARDEVLQVVGAIAG</sequence>
<reference key="1">
    <citation type="journal article" date="2009" name="J. Bacteriol.">
        <title>Genomic sequencing reveals regulatory mutations and recombinational events in the widely used MC4100 lineage of Escherichia coli K-12.</title>
        <authorList>
            <person name="Ferenci T."/>
            <person name="Zhou Z."/>
            <person name="Betteridge T."/>
            <person name="Ren Y."/>
            <person name="Liu Y."/>
            <person name="Feng L."/>
            <person name="Reeves P.R."/>
            <person name="Wang L."/>
        </authorList>
    </citation>
    <scope>NUCLEOTIDE SEQUENCE [LARGE SCALE GENOMIC DNA]</scope>
    <source>
        <strain>K12 / MC4100 / BW2952</strain>
    </source>
</reference>
<feature type="chain" id="PRO_1000203936" description="tRNA dimethylallyltransferase">
    <location>
        <begin position="1"/>
        <end position="316"/>
    </location>
</feature>
<feature type="region of interest" description="Interaction with substrate tRNA" evidence="1">
    <location>
        <begin position="42"/>
        <end position="45"/>
    </location>
</feature>
<feature type="region of interest" description="Interaction with substrate tRNA" evidence="1">
    <location>
        <begin position="166"/>
        <end position="170"/>
    </location>
</feature>
<feature type="region of interest" description="Interaction with substrate tRNA" evidence="1">
    <location>
        <begin position="247"/>
        <end position="252"/>
    </location>
</feature>
<feature type="region of interest" description="Interaction with substrate tRNA" evidence="1">
    <location>
        <begin position="280"/>
        <end position="287"/>
    </location>
</feature>
<feature type="binding site" evidence="1">
    <location>
        <begin position="17"/>
        <end position="24"/>
    </location>
    <ligand>
        <name>ATP</name>
        <dbReference type="ChEBI" id="CHEBI:30616"/>
    </ligand>
</feature>
<feature type="binding site" evidence="1">
    <location>
        <begin position="19"/>
        <end position="24"/>
    </location>
    <ligand>
        <name>substrate</name>
    </ligand>
</feature>
<feature type="site" description="Interaction with substrate tRNA" evidence="1">
    <location>
        <position position="108"/>
    </location>
</feature>
<feature type="site" description="Interaction with substrate tRNA" evidence="1">
    <location>
        <position position="130"/>
    </location>
</feature>
<dbReference type="EC" id="2.5.1.75" evidence="1"/>
<dbReference type="EMBL" id="CP001396">
    <property type="protein sequence ID" value="ACR62742.1"/>
    <property type="molecule type" value="Genomic_DNA"/>
</dbReference>
<dbReference type="RefSeq" id="WP_001280345.1">
    <property type="nucleotide sequence ID" value="NC_012759.1"/>
</dbReference>
<dbReference type="SMR" id="C4ZR48"/>
<dbReference type="GeneID" id="93777650"/>
<dbReference type="KEGG" id="ebw:BWG_3883"/>
<dbReference type="HOGENOM" id="CLU_032616_0_0_6"/>
<dbReference type="GO" id="GO:0005524">
    <property type="term" value="F:ATP binding"/>
    <property type="evidence" value="ECO:0007669"/>
    <property type="project" value="UniProtKB-UniRule"/>
</dbReference>
<dbReference type="GO" id="GO:0052381">
    <property type="term" value="F:tRNA dimethylallyltransferase activity"/>
    <property type="evidence" value="ECO:0007669"/>
    <property type="project" value="UniProtKB-UniRule"/>
</dbReference>
<dbReference type="GO" id="GO:0006400">
    <property type="term" value="P:tRNA modification"/>
    <property type="evidence" value="ECO:0007669"/>
    <property type="project" value="TreeGrafter"/>
</dbReference>
<dbReference type="FunFam" id="1.10.20.140:FF:000001">
    <property type="entry name" value="tRNA dimethylallyltransferase"/>
    <property type="match status" value="1"/>
</dbReference>
<dbReference type="FunFam" id="1.10.287.890:FF:000001">
    <property type="entry name" value="tRNA dimethylallyltransferase"/>
    <property type="match status" value="1"/>
</dbReference>
<dbReference type="Gene3D" id="1.10.20.140">
    <property type="match status" value="1"/>
</dbReference>
<dbReference type="Gene3D" id="1.10.287.890">
    <property type="entry name" value="Crystal structure of tRNA isopentenylpyrophosphate transferase (bh2366) domain"/>
    <property type="match status" value="1"/>
</dbReference>
<dbReference type="Gene3D" id="3.40.50.300">
    <property type="entry name" value="P-loop containing nucleotide triphosphate hydrolases"/>
    <property type="match status" value="1"/>
</dbReference>
<dbReference type="HAMAP" id="MF_00185">
    <property type="entry name" value="IPP_trans"/>
    <property type="match status" value="1"/>
</dbReference>
<dbReference type="InterPro" id="IPR039657">
    <property type="entry name" value="Dimethylallyltransferase"/>
</dbReference>
<dbReference type="InterPro" id="IPR018022">
    <property type="entry name" value="IPT"/>
</dbReference>
<dbReference type="InterPro" id="IPR027417">
    <property type="entry name" value="P-loop_NTPase"/>
</dbReference>
<dbReference type="NCBIfam" id="TIGR00174">
    <property type="entry name" value="miaA"/>
    <property type="match status" value="1"/>
</dbReference>
<dbReference type="PANTHER" id="PTHR11088">
    <property type="entry name" value="TRNA DIMETHYLALLYLTRANSFERASE"/>
    <property type="match status" value="1"/>
</dbReference>
<dbReference type="PANTHER" id="PTHR11088:SF60">
    <property type="entry name" value="TRNA DIMETHYLALLYLTRANSFERASE"/>
    <property type="match status" value="1"/>
</dbReference>
<dbReference type="Pfam" id="PF01715">
    <property type="entry name" value="IPPT"/>
    <property type="match status" value="1"/>
</dbReference>
<dbReference type="SUPFAM" id="SSF52540">
    <property type="entry name" value="P-loop containing nucleoside triphosphate hydrolases"/>
    <property type="match status" value="1"/>
</dbReference>
<name>MIAA_ECOBW</name>
<evidence type="ECO:0000255" key="1">
    <source>
        <dbReference type="HAMAP-Rule" id="MF_00185"/>
    </source>
</evidence>
<proteinExistence type="inferred from homology"/>
<accession>C4ZR48</accession>
<protein>
    <recommendedName>
        <fullName evidence="1">tRNA dimethylallyltransferase</fullName>
        <ecNumber evidence="1">2.5.1.75</ecNumber>
    </recommendedName>
    <alternativeName>
        <fullName evidence="1">Dimethylallyl diphosphate:tRNA dimethylallyltransferase</fullName>
        <shortName evidence="1">DMAPP:tRNA dimethylallyltransferase</shortName>
        <shortName evidence="1">DMATase</shortName>
    </alternativeName>
    <alternativeName>
        <fullName evidence="1">Isopentenyl-diphosphate:tRNA isopentenyltransferase</fullName>
        <shortName evidence="1">IPP transferase</shortName>
        <shortName evidence="1">IPPT</shortName>
        <shortName evidence="1">IPTase</shortName>
    </alternativeName>
</protein>
<comment type="function">
    <text evidence="1">Catalyzes the transfer of a dimethylallyl group onto the adenine at position 37 in tRNAs that read codons beginning with uridine, leading to the formation of N6-(dimethylallyl)adenosine (i(6)A).</text>
</comment>
<comment type="catalytic activity">
    <reaction evidence="1">
        <text>adenosine(37) in tRNA + dimethylallyl diphosphate = N(6)-dimethylallyladenosine(37) in tRNA + diphosphate</text>
        <dbReference type="Rhea" id="RHEA:26482"/>
        <dbReference type="Rhea" id="RHEA-COMP:10162"/>
        <dbReference type="Rhea" id="RHEA-COMP:10375"/>
        <dbReference type="ChEBI" id="CHEBI:33019"/>
        <dbReference type="ChEBI" id="CHEBI:57623"/>
        <dbReference type="ChEBI" id="CHEBI:74411"/>
        <dbReference type="ChEBI" id="CHEBI:74415"/>
        <dbReference type="EC" id="2.5.1.75"/>
    </reaction>
</comment>
<comment type="cofactor">
    <cofactor evidence="1">
        <name>Mg(2+)</name>
        <dbReference type="ChEBI" id="CHEBI:18420"/>
    </cofactor>
</comment>
<comment type="subunit">
    <text evidence="1">Monomer.</text>
</comment>
<comment type="similarity">
    <text evidence="1">Belongs to the IPP transferase family.</text>
</comment>
<keyword id="KW-0067">ATP-binding</keyword>
<keyword id="KW-0460">Magnesium</keyword>
<keyword id="KW-0547">Nucleotide-binding</keyword>
<keyword id="KW-0808">Transferase</keyword>
<keyword id="KW-0819">tRNA processing</keyword>
<gene>
    <name evidence="1" type="primary">miaA</name>
    <name type="ordered locus">BWG_3883</name>
</gene>
<organism>
    <name type="scientific">Escherichia coli (strain K12 / MC4100 / BW2952)</name>
    <dbReference type="NCBI Taxonomy" id="595496"/>
    <lineage>
        <taxon>Bacteria</taxon>
        <taxon>Pseudomonadati</taxon>
        <taxon>Pseudomonadota</taxon>
        <taxon>Gammaproteobacteria</taxon>
        <taxon>Enterobacterales</taxon>
        <taxon>Enterobacteriaceae</taxon>
        <taxon>Escherichia</taxon>
    </lineage>
</organism>